<sequence length="433" mass="47822">MKNELMQRLRLKYPPPDGYCRWGRIQDVSATLLNAWLPGVFMGELCCIKPGEELAEVVGINGSKALLSPFTSTIGLHCGQQVMALRRRHQVPVGEALLGRVIDGFGRPLDGRELPDVCWKDYDAMPPPAMVRQPITQPLMTGIRAIDSVATCGEGQRVGIFSAPGVGKSTLLAMLCNAPDADSNVLVLIGERGREVREFIDFTLSEETRKRCVIVVATSDRPALERVRALFVATTIAEFFRDNGKRVVLLADSLTRYARAAREIALAAGETAVSGEYPPGVFSALPRLLERTGMGEKGSITAFYTVLVEGDDMNEPLADEVRSLLDGHIVLSRRLAERGHYPAIDVLATLSRVFPVVTSHEHRQLAAILRRCLALYQEVELLIRIGEYQRGVDTDTDKAIDTYPDICTFLRQSKDEVCGPELLIEKLHQILTE</sequence>
<accession>P74857</accession>
<reference key="1">
    <citation type="journal article" date="1997" name="Mol. Microbiol.">
        <title>Functional analysis of ssaJ and the ssaK/U operon, 13 genes encoding components of the type III secretion apparatus of Salmonella pathogenicity island 2.</title>
        <authorList>
            <person name="Hensel M."/>
            <person name="Shea J.E."/>
            <person name="Raupach B."/>
            <person name="Monack D."/>
            <person name="Falkow S."/>
            <person name="Gleeson C."/>
            <person name="Kubo T."/>
            <person name="Holden D.W."/>
        </authorList>
    </citation>
    <scope>NUCLEOTIDE SEQUENCE [GENOMIC DNA]</scope>
    <source>
        <strain>LT2</strain>
    </source>
</reference>
<reference key="2">
    <citation type="journal article" date="2001" name="Nature">
        <title>Complete genome sequence of Salmonella enterica serovar Typhimurium LT2.</title>
        <authorList>
            <person name="McClelland M."/>
            <person name="Sanderson K.E."/>
            <person name="Spieth J."/>
            <person name="Clifton S.W."/>
            <person name="Latreille P."/>
            <person name="Courtney L."/>
            <person name="Porwollik S."/>
            <person name="Ali J."/>
            <person name="Dante M."/>
            <person name="Du F."/>
            <person name="Hou S."/>
            <person name="Layman D."/>
            <person name="Leonard S."/>
            <person name="Nguyen C."/>
            <person name="Scott K."/>
            <person name="Holmes A."/>
            <person name="Grewal N."/>
            <person name="Mulvaney E."/>
            <person name="Ryan E."/>
            <person name="Sun H."/>
            <person name="Florea L."/>
            <person name="Miller W."/>
            <person name="Stoneking T."/>
            <person name="Nhan M."/>
            <person name="Waterston R."/>
            <person name="Wilson R.K."/>
        </authorList>
    </citation>
    <scope>NUCLEOTIDE SEQUENCE [LARGE SCALE GENOMIC DNA]</scope>
    <source>
        <strain>LT2 / SGSC1412 / ATCC 700720</strain>
    </source>
</reference>
<reference key="3">
    <citation type="journal article" date="1998" name="Microbiol. Mol. Biol. Rev.">
        <title>Type III protein secretion systems in bacterial pathogens of animals and plants.</title>
        <authorList>
            <person name="Hueck C.J."/>
        </authorList>
    </citation>
    <scope>REVIEW</scope>
    <scope>NOMENCLATURE</scope>
</reference>
<reference key="4">
    <citation type="journal article" date="2014" name="PLoS ONE">
        <title>Functional characterization of the type III secretion ATPase SsaN encoded by Salmonella pathogenicity island 2.</title>
        <authorList>
            <person name="Yoshida Y."/>
            <person name="Miki T."/>
            <person name="Ono S."/>
            <person name="Haneda T."/>
            <person name="Ito M."/>
            <person name="Okada N."/>
        </authorList>
    </citation>
    <scope>FUNCTION</scope>
    <scope>ATPASE ACTIVITY</scope>
    <scope>BIOPHYSICOCHEMICAL PROPERTIES</scope>
    <scope>SUBUNIT</scope>
    <scope>INTERACTION WITH T3SS-2 COMPONENTS AND T3SS-2 CHAPERONES</scope>
    <scope>SUBCELLULAR LOCATION</scope>
    <scope>DISRUPTION PHENOTYPE</scope>
    <scope>MUTAGENESIS OF ARG-192</scope>
    <source>
        <strain>SL1344</strain>
    </source>
</reference>
<reference key="5">
    <citation type="journal article" date="2018" name="FEMS Microbiol. Lett.">
        <title>Bacterial type III secretion systems: a complex device for the delivery of bacterial effector proteins into eukaryotic host cells.</title>
        <authorList>
            <person name="Wagner S."/>
            <person name="Grin I."/>
            <person name="Malmsheimer S."/>
            <person name="Singh N."/>
            <person name="Torres-Vargas C.E."/>
            <person name="Westerhausen S."/>
        </authorList>
    </citation>
    <scope>REVIEW</scope>
    <scope>SUBUNIT</scope>
</reference>
<reference evidence="11" key="6">
    <citation type="journal article" date="2014" name="J. Biol. Chem.">
        <title>Identification of the docking site between a type III secretion system ATPase and a chaperone for effector cargo.</title>
        <authorList>
            <person name="Allison S.E."/>
            <person name="Tuinema B.R."/>
            <person name="Everson E.S."/>
            <person name="Sugiman-Marangos S."/>
            <person name="Zhang K."/>
            <person name="Junop M.S."/>
            <person name="Coombes B.K."/>
        </authorList>
    </citation>
    <scope>X-RAY CRYSTALLOGRAPHY (2.09 ANGSTROMS) OF 90-433</scope>
    <scope>FUNCTION</scope>
    <scope>SUBUNIT</scope>
    <scope>INTERACTION WITH SRCA</scope>
    <scope>DISRUPTION PHENOTYPE</scope>
    <scope>MUTAGENESIS OF VAL-379</scope>
</reference>
<proteinExistence type="evidence at protein level"/>
<dbReference type="EC" id="7.4.2.8" evidence="1"/>
<dbReference type="EMBL" id="Y09357">
    <property type="protein sequence ID" value="CAA70537.1"/>
    <property type="molecule type" value="Genomic_DNA"/>
</dbReference>
<dbReference type="EMBL" id="AE006468">
    <property type="protein sequence ID" value="AAL20339.1"/>
    <property type="molecule type" value="Genomic_DNA"/>
</dbReference>
<dbReference type="RefSeq" id="NP_460380.1">
    <property type="nucleotide sequence ID" value="NC_003197.2"/>
</dbReference>
<dbReference type="RefSeq" id="WP_000787213.1">
    <property type="nucleotide sequence ID" value="NC_003197.2"/>
</dbReference>
<dbReference type="PDB" id="4NPH">
    <property type="method" value="X-ray"/>
    <property type="resolution" value="2.09 A"/>
    <property type="chains" value="A=90-433"/>
</dbReference>
<dbReference type="PDBsum" id="4NPH"/>
<dbReference type="SMR" id="P74857"/>
<dbReference type="IntAct" id="P74857">
    <property type="interactions" value="6"/>
</dbReference>
<dbReference type="STRING" id="99287.STM1415"/>
<dbReference type="PaxDb" id="99287-STM1415"/>
<dbReference type="GeneID" id="1252933"/>
<dbReference type="KEGG" id="stm:STM1415"/>
<dbReference type="PATRIC" id="fig|99287.12.peg.1499"/>
<dbReference type="HOGENOM" id="CLU_022398_5_1_6"/>
<dbReference type="OMA" id="EGFKIKP"/>
<dbReference type="PhylomeDB" id="P74857"/>
<dbReference type="BioCyc" id="SENT99287:STM1415-MONOMER"/>
<dbReference type="BRENDA" id="7.4.2.8">
    <property type="organism ID" value="2169"/>
</dbReference>
<dbReference type="EvolutionaryTrace" id="P74857"/>
<dbReference type="Proteomes" id="UP000001014">
    <property type="component" value="Chromosome"/>
</dbReference>
<dbReference type="GO" id="GO:0005737">
    <property type="term" value="C:cytoplasm"/>
    <property type="evidence" value="ECO:0007669"/>
    <property type="project" value="UniProtKB-SubCell"/>
</dbReference>
<dbReference type="GO" id="GO:0030430">
    <property type="term" value="C:host cell cytoplasm"/>
    <property type="evidence" value="ECO:0000315"/>
    <property type="project" value="AgBase"/>
</dbReference>
<dbReference type="GO" id="GO:0033644">
    <property type="term" value="C:host cell membrane"/>
    <property type="evidence" value="ECO:0000315"/>
    <property type="project" value="AgBase"/>
</dbReference>
<dbReference type="GO" id="GO:0030257">
    <property type="term" value="C:type III protein secretion system complex"/>
    <property type="evidence" value="ECO:0007669"/>
    <property type="project" value="InterPro"/>
</dbReference>
<dbReference type="GO" id="GO:0005524">
    <property type="term" value="F:ATP binding"/>
    <property type="evidence" value="ECO:0007669"/>
    <property type="project" value="UniProtKB-KW"/>
</dbReference>
<dbReference type="GO" id="GO:0016887">
    <property type="term" value="F:ATP hydrolysis activity"/>
    <property type="evidence" value="ECO:0000315"/>
    <property type="project" value="AgBase"/>
</dbReference>
<dbReference type="GO" id="GO:0008564">
    <property type="term" value="F:protein-exporting ATPase activity"/>
    <property type="evidence" value="ECO:0007669"/>
    <property type="project" value="UniProtKB-EC"/>
</dbReference>
<dbReference type="GO" id="GO:0051087">
    <property type="term" value="F:protein-folding chaperone binding"/>
    <property type="evidence" value="ECO:0000353"/>
    <property type="project" value="AgBase"/>
</dbReference>
<dbReference type="GO" id="GO:0046961">
    <property type="term" value="F:proton-transporting ATPase activity, rotational mechanism"/>
    <property type="evidence" value="ECO:0007669"/>
    <property type="project" value="InterPro"/>
</dbReference>
<dbReference type="GO" id="GO:0050714">
    <property type="term" value="P:positive regulation of protein secretion"/>
    <property type="evidence" value="ECO:0000315"/>
    <property type="project" value="AgBase"/>
</dbReference>
<dbReference type="GO" id="GO:0030254">
    <property type="term" value="P:protein secretion by the type III secretion system"/>
    <property type="evidence" value="ECO:0007669"/>
    <property type="project" value="InterPro"/>
</dbReference>
<dbReference type="GO" id="GO:0015986">
    <property type="term" value="P:proton motive force-driven ATP synthesis"/>
    <property type="evidence" value="ECO:0007669"/>
    <property type="project" value="GOC"/>
</dbReference>
<dbReference type="CDD" id="cd18117">
    <property type="entry name" value="ATP-synt_flagellum-secretory_path_III_N"/>
    <property type="match status" value="1"/>
</dbReference>
<dbReference type="CDD" id="cd01136">
    <property type="entry name" value="ATPase_flagellum-secretory_path_III"/>
    <property type="match status" value="1"/>
</dbReference>
<dbReference type="FunFam" id="3.40.50.300:FF:001651">
    <property type="entry name" value="EscN/YscN/HrcN family type III secretion system ATPase"/>
    <property type="match status" value="1"/>
</dbReference>
<dbReference type="FunFam" id="3.40.50.12240:FF:000002">
    <property type="entry name" value="Flagellum-specific ATP synthase FliI"/>
    <property type="match status" value="1"/>
</dbReference>
<dbReference type="Gene3D" id="1.20.1270.330">
    <property type="match status" value="1"/>
</dbReference>
<dbReference type="Gene3D" id="3.40.50.300">
    <property type="entry name" value="P-loop containing nucleotide triphosphate hydrolases"/>
    <property type="match status" value="1"/>
</dbReference>
<dbReference type="InterPro" id="IPR003593">
    <property type="entry name" value="AAA+_ATPase"/>
</dbReference>
<dbReference type="InterPro" id="IPR050053">
    <property type="entry name" value="ATPase_alpha/beta_chains"/>
</dbReference>
<dbReference type="InterPro" id="IPR000194">
    <property type="entry name" value="ATPase_F1/V1/A1_a/bsu_nucl-bd"/>
</dbReference>
<dbReference type="InterPro" id="IPR005714">
    <property type="entry name" value="ATPase_T3SS_FliI/YscN"/>
</dbReference>
<dbReference type="InterPro" id="IPR013380">
    <property type="entry name" value="ATPase_T3SS_SctN"/>
</dbReference>
<dbReference type="InterPro" id="IPR027417">
    <property type="entry name" value="P-loop_NTPase"/>
</dbReference>
<dbReference type="InterPro" id="IPR040627">
    <property type="entry name" value="T3SS_ATPase_C"/>
</dbReference>
<dbReference type="NCBIfam" id="TIGR01026">
    <property type="entry name" value="fliI_yscN"/>
    <property type="match status" value="1"/>
</dbReference>
<dbReference type="NCBIfam" id="TIGR02546">
    <property type="entry name" value="III_secr_ATP"/>
    <property type="match status" value="1"/>
</dbReference>
<dbReference type="NCBIfam" id="NF005765">
    <property type="entry name" value="PRK07594.1"/>
    <property type="match status" value="1"/>
</dbReference>
<dbReference type="PANTHER" id="PTHR15184">
    <property type="entry name" value="ATP SYNTHASE"/>
    <property type="match status" value="1"/>
</dbReference>
<dbReference type="PANTHER" id="PTHR15184:SF62">
    <property type="entry name" value="SPI-2 TYPE 3 SECRETION SYSTEM ATPASE"/>
    <property type="match status" value="1"/>
</dbReference>
<dbReference type="Pfam" id="PF00006">
    <property type="entry name" value="ATP-synt_ab"/>
    <property type="match status" value="1"/>
</dbReference>
<dbReference type="Pfam" id="PF18269">
    <property type="entry name" value="T3SS_ATPase_C"/>
    <property type="match status" value="1"/>
</dbReference>
<dbReference type="SMART" id="SM00382">
    <property type="entry name" value="AAA"/>
    <property type="match status" value="1"/>
</dbReference>
<dbReference type="SUPFAM" id="SSF52540">
    <property type="entry name" value="P-loop containing nucleoside triphosphate hydrolases"/>
    <property type="match status" value="1"/>
</dbReference>
<feature type="chain" id="PRO_0000144708" description="SPI-2 type 3 secretion system ATPase">
    <location>
        <begin position="1"/>
        <end position="433"/>
    </location>
</feature>
<feature type="binding site" evidence="2">
    <location>
        <begin position="165"/>
        <end position="170"/>
    </location>
    <ligand>
        <name>ATP</name>
        <dbReference type="ChEBI" id="CHEBI:30616"/>
    </ligand>
</feature>
<feature type="mutagenesis site" description="Lack of ATPase activity. Cannot dissociate SseB/SsaE complex." evidence="3">
    <original>R</original>
    <variation>G</variation>
    <location>
        <position position="192"/>
    </location>
</feature>
<feature type="mutagenesis site" description="Retains ATPase activity, but does not interact with the chaperone SrcA. Strong virulence attenuation phenotype." evidence="4">
    <original>V</original>
    <variation>P</variation>
    <location>
        <position position="379"/>
    </location>
</feature>
<feature type="strand" evidence="12">
    <location>
        <begin position="91"/>
        <end position="94"/>
    </location>
</feature>
<feature type="helix" evidence="12">
    <location>
        <begin position="95"/>
        <end position="97"/>
    </location>
</feature>
<feature type="strand" evidence="12">
    <location>
        <begin position="100"/>
        <end position="105"/>
    </location>
</feature>
<feature type="strand" evidence="12">
    <location>
        <begin position="110"/>
        <end position="112"/>
    </location>
</feature>
<feature type="strand" evidence="12">
    <location>
        <begin position="118"/>
        <end position="120"/>
    </location>
</feature>
<feature type="helix" evidence="12">
    <location>
        <begin position="144"/>
        <end position="149"/>
    </location>
</feature>
<feature type="strand" evidence="12">
    <location>
        <begin position="157"/>
        <end position="162"/>
    </location>
</feature>
<feature type="helix" evidence="12">
    <location>
        <begin position="168"/>
        <end position="175"/>
    </location>
</feature>
<feature type="strand" evidence="12">
    <location>
        <begin position="182"/>
        <end position="190"/>
    </location>
</feature>
<feature type="helix" evidence="12">
    <location>
        <begin position="193"/>
        <end position="202"/>
    </location>
</feature>
<feature type="helix" evidence="12">
    <location>
        <begin position="206"/>
        <end position="209"/>
    </location>
</feature>
<feature type="strand" evidence="12">
    <location>
        <begin position="212"/>
        <end position="217"/>
    </location>
</feature>
<feature type="helix" evidence="12">
    <location>
        <begin position="223"/>
        <end position="242"/>
    </location>
</feature>
<feature type="strand" evidence="12">
    <location>
        <begin position="246"/>
        <end position="252"/>
    </location>
</feature>
<feature type="helix" evidence="12">
    <location>
        <begin position="254"/>
        <end position="266"/>
    </location>
</feature>
<feature type="turn" evidence="12">
    <location>
        <begin position="267"/>
        <end position="269"/>
    </location>
</feature>
<feature type="helix" evidence="12">
    <location>
        <begin position="281"/>
        <end position="283"/>
    </location>
</feature>
<feature type="helix" evidence="12">
    <location>
        <begin position="284"/>
        <end position="290"/>
    </location>
</feature>
<feature type="strand" evidence="12">
    <location>
        <begin position="299"/>
        <end position="307"/>
    </location>
</feature>
<feature type="helix" evidence="12">
    <location>
        <begin position="315"/>
        <end position="324"/>
    </location>
</feature>
<feature type="strand" evidence="12">
    <location>
        <begin position="325"/>
        <end position="331"/>
    </location>
</feature>
<feature type="helix" evidence="12">
    <location>
        <begin position="333"/>
        <end position="337"/>
    </location>
</feature>
<feature type="helix" evidence="12">
    <location>
        <begin position="346"/>
        <end position="348"/>
    </location>
</feature>
<feature type="helix" evidence="12">
    <location>
        <begin position="354"/>
        <end position="357"/>
    </location>
</feature>
<feature type="helix" evidence="12">
    <location>
        <begin position="360"/>
        <end position="384"/>
    </location>
</feature>
<feature type="helix" evidence="12">
    <location>
        <begin position="394"/>
        <end position="410"/>
    </location>
</feature>
<feature type="helix" evidence="12">
    <location>
        <begin position="420"/>
        <end position="431"/>
    </location>
</feature>
<evidence type="ECO:0000250" key="1">
    <source>
        <dbReference type="UniProtKB" id="P0A1B9"/>
    </source>
</evidence>
<evidence type="ECO:0000250" key="2">
    <source>
        <dbReference type="UniProtKB" id="P0A1C1"/>
    </source>
</evidence>
<evidence type="ECO:0000269" key="3">
    <source>
    </source>
</evidence>
<evidence type="ECO:0000269" key="4">
    <source>
    </source>
</evidence>
<evidence type="ECO:0000269" key="5">
    <source>
    </source>
</evidence>
<evidence type="ECO:0000303" key="6">
    <source>
    </source>
</evidence>
<evidence type="ECO:0000303" key="7">
    <source>
    </source>
</evidence>
<evidence type="ECO:0000305" key="8"/>
<evidence type="ECO:0000305" key="9">
    <source>
    </source>
</evidence>
<evidence type="ECO:0000305" key="10">
    <source>
    </source>
</evidence>
<evidence type="ECO:0007744" key="11">
    <source>
        <dbReference type="PDB" id="4NPH"/>
    </source>
</evidence>
<evidence type="ECO:0007829" key="12">
    <source>
        <dbReference type="PDB" id="4NPH"/>
    </source>
</evidence>
<name>SCTN2_SALTY</name>
<gene>
    <name evidence="7" type="primary">sctN2</name>
    <name evidence="6" type="synonym">ssaN</name>
    <name type="ordered locus">STM1415</name>
</gene>
<protein>
    <recommendedName>
        <fullName evidence="8">SPI-2 type 3 secretion system ATPase</fullName>
        <shortName evidence="8">T3SS-2 ATPase</shortName>
        <ecNumber evidence="1">7.4.2.8</ecNumber>
    </recommendedName>
</protein>
<organism>
    <name type="scientific">Salmonella typhimurium (strain LT2 / SGSC1412 / ATCC 700720)</name>
    <dbReference type="NCBI Taxonomy" id="99287"/>
    <lineage>
        <taxon>Bacteria</taxon>
        <taxon>Pseudomonadati</taxon>
        <taxon>Pseudomonadota</taxon>
        <taxon>Gammaproteobacteria</taxon>
        <taxon>Enterobacterales</taxon>
        <taxon>Enterobacteriaceae</taxon>
        <taxon>Salmonella</taxon>
    </lineage>
</organism>
<comment type="function">
    <text evidence="1 3 4 9 10">ATPase component of the type III secretion system (T3SS), also called injectisome, which is used to inject bacterial effector proteins into eukaryotic host cells (PubMed:24722491). Acts as a molecular motor to provide the energy that is required for the export of proteins (By similarity). Required for type III secretion apparatus (T3SA) formation, secretion of a subset of SPI-2 effectors and virulence (PubMed:24722491, PubMed:25035427). May play a critical role in T3SS substrate recognition, disassembly of the effector/chaperone complex and unfolding of the effector in an ATP-dependent manner prior to secretion (Probable). Releases the effector protein SseB from the T3SS-2 specific chaperone SsaE in an ATP-dependent manner (PubMed:24722491).</text>
</comment>
<comment type="catalytic activity">
    <reaction evidence="1">
        <text>ATP + H2O + cellular proteinSide 1 = ADP + phosphate + cellular proteinSide 2.</text>
        <dbReference type="EC" id="7.4.2.8"/>
    </reaction>
</comment>
<comment type="biophysicochemical properties">
    <kinetics>
        <KM evidence="3">0.81 mM for ATP</KM>
        <Vmax evidence="3">0.36 umol/min/mg enzyme for ATPase activity</Vmax>
    </kinetics>
</comment>
<comment type="subunit">
    <text evidence="3 4 5">The core secretion machinery of the T3SS is composed of approximately 20 different proteins, including cytoplasmic components, a base, an export apparatus and a needle (PubMed:30107569). This subunit is part of the cytosolic complex (PubMed:24722491). Forms homohexamers (PubMed:25035427). Forms a complex with SsaK/SctL (stator protein) and SsaQ/SctQ (the major sorting platform component) (PubMed:24722491). Interacts with the T3SS-2 specific chaperones SsaE, SseA, SscA, SscB, and SrcA (PubMed:24722491, PubMed:25035427).</text>
</comment>
<comment type="subcellular location">
    <subcellularLocation>
        <location evidence="3">Cytoplasm</location>
    </subcellularLocation>
    <text evidence="3">Can associate with the membrane regardless of the presence of the other ATPase-associated components.</text>
</comment>
<comment type="disruption phenotype">
    <text evidence="3 4">Deletion mutant cannot secrete the effector proteins SseB, SseC, SseD, SseF, SseG and SseJ (PubMed:24722491, PubMed:25035427). Mutant is also defective for the secretion of the translocon proteins SseC/SctE and SseD/SctB (PubMed:25035427). Mutant shows decreased virulence in the mouse model of systemic infection (PubMed:24722491).</text>
</comment>
<comment type="similarity">
    <text evidence="8">Belongs to the ATPase alpha/beta chains family. T3SS ATPase subfamily.</text>
</comment>
<keyword id="KW-0002">3D-structure</keyword>
<keyword id="KW-0067">ATP-binding</keyword>
<keyword id="KW-0963">Cytoplasm</keyword>
<keyword id="KW-0547">Nucleotide-binding</keyword>
<keyword id="KW-0653">Protein transport</keyword>
<keyword id="KW-1185">Reference proteome</keyword>
<keyword id="KW-1278">Translocase</keyword>
<keyword id="KW-0813">Transport</keyword>
<keyword id="KW-0843">Virulence</keyword>